<protein>
    <recommendedName>
        <fullName evidence="1">Tryptophan synthase beta chain</fullName>
        <ecNumber evidence="1">4.2.1.20</ecNumber>
    </recommendedName>
</protein>
<gene>
    <name evidence="1" type="primary">trpB</name>
    <name type="ordered locus">Jann_3589</name>
</gene>
<name>TRPB_JANSC</name>
<keyword id="KW-0028">Amino-acid biosynthesis</keyword>
<keyword id="KW-0057">Aromatic amino acid biosynthesis</keyword>
<keyword id="KW-0456">Lyase</keyword>
<keyword id="KW-0663">Pyridoxal phosphate</keyword>
<keyword id="KW-1185">Reference proteome</keyword>
<keyword id="KW-0822">Tryptophan biosynthesis</keyword>
<accession>Q28LA6</accession>
<evidence type="ECO:0000255" key="1">
    <source>
        <dbReference type="HAMAP-Rule" id="MF_00133"/>
    </source>
</evidence>
<feature type="chain" id="PRO_1000018348" description="Tryptophan synthase beta chain">
    <location>
        <begin position="1"/>
        <end position="409"/>
    </location>
</feature>
<feature type="modified residue" description="N6-(pyridoxal phosphate)lysine" evidence="1">
    <location>
        <position position="98"/>
    </location>
</feature>
<sequence>MPDDLLNSFMTGPDEKGRFGDFGGRFVSETLMPLILELEQQYEHAKTDDSFWAEMQDLWTHYVGRPSPLYFAKRLTERLGGAKIYLKRDELNHTGAHKINNVLGQIILARRMGKTRIIAETGAGQHGVATATVCAKFGLKCIVYMGATDVERQAPNVFRMKLLGAEVVPVTSGRGTLKDAMNDALRDWVTNVRDTFYCIGTVAGPHPYPAMVRDFQAIIGKETRDQMMAAEGRLPDTLIAAIGGGSNAMGLFFPFLDDKSVNIIGVEAGGHGVNEKMEHCASLTGGRPGVLHGNRTYLLQDEDGQILEGHSISAGLDYPGIGPEHAWLHEIGRAQYVSITDREALDAFQLSCETEGIIPALEPSHALAHVCKIAPDMPRDHLLVMNMCGRGDKDIFTVARALGWDMDGA</sequence>
<proteinExistence type="inferred from homology"/>
<organism>
    <name type="scientific">Jannaschia sp. (strain CCS1)</name>
    <dbReference type="NCBI Taxonomy" id="290400"/>
    <lineage>
        <taxon>Bacteria</taxon>
        <taxon>Pseudomonadati</taxon>
        <taxon>Pseudomonadota</taxon>
        <taxon>Alphaproteobacteria</taxon>
        <taxon>Rhodobacterales</taxon>
        <taxon>Roseobacteraceae</taxon>
        <taxon>Jannaschia</taxon>
    </lineage>
</organism>
<comment type="function">
    <text evidence="1">The beta subunit is responsible for the synthesis of L-tryptophan from indole and L-serine.</text>
</comment>
<comment type="catalytic activity">
    <reaction evidence="1">
        <text>(1S,2R)-1-C-(indol-3-yl)glycerol 3-phosphate + L-serine = D-glyceraldehyde 3-phosphate + L-tryptophan + H2O</text>
        <dbReference type="Rhea" id="RHEA:10532"/>
        <dbReference type="ChEBI" id="CHEBI:15377"/>
        <dbReference type="ChEBI" id="CHEBI:33384"/>
        <dbReference type="ChEBI" id="CHEBI:57912"/>
        <dbReference type="ChEBI" id="CHEBI:58866"/>
        <dbReference type="ChEBI" id="CHEBI:59776"/>
        <dbReference type="EC" id="4.2.1.20"/>
    </reaction>
</comment>
<comment type="cofactor">
    <cofactor evidence="1">
        <name>pyridoxal 5'-phosphate</name>
        <dbReference type="ChEBI" id="CHEBI:597326"/>
    </cofactor>
</comment>
<comment type="pathway">
    <text evidence="1">Amino-acid biosynthesis; L-tryptophan biosynthesis; L-tryptophan from chorismate: step 5/5.</text>
</comment>
<comment type="subunit">
    <text evidence="1">Tetramer of two alpha and two beta chains.</text>
</comment>
<comment type="similarity">
    <text evidence="1">Belongs to the TrpB family.</text>
</comment>
<reference key="1">
    <citation type="submission" date="2006-02" db="EMBL/GenBank/DDBJ databases">
        <title>Complete sequence of chromosome of Jannaschia sp. CCS1.</title>
        <authorList>
            <consortium name="US DOE Joint Genome Institute"/>
            <person name="Copeland A."/>
            <person name="Lucas S."/>
            <person name="Lapidus A."/>
            <person name="Barry K."/>
            <person name="Detter J.C."/>
            <person name="Glavina del Rio T."/>
            <person name="Hammon N."/>
            <person name="Israni S."/>
            <person name="Pitluck S."/>
            <person name="Brettin T."/>
            <person name="Bruce D."/>
            <person name="Han C."/>
            <person name="Tapia R."/>
            <person name="Gilna P."/>
            <person name="Chertkov O."/>
            <person name="Saunders E."/>
            <person name="Schmutz J."/>
            <person name="Larimer F."/>
            <person name="Land M."/>
            <person name="Kyrpides N."/>
            <person name="Lykidis A."/>
            <person name="Moran M.A."/>
            <person name="Belas R."/>
            <person name="Ye W."/>
            <person name="Buchan A."/>
            <person name="Gonzalez J.M."/>
            <person name="Schell M.A."/>
            <person name="Richardson P."/>
        </authorList>
    </citation>
    <scope>NUCLEOTIDE SEQUENCE [LARGE SCALE GENOMIC DNA]</scope>
    <source>
        <strain>CCS1</strain>
    </source>
</reference>
<dbReference type="EC" id="4.2.1.20" evidence="1"/>
<dbReference type="EMBL" id="CP000264">
    <property type="protein sequence ID" value="ABD56506.1"/>
    <property type="molecule type" value="Genomic_DNA"/>
</dbReference>
<dbReference type="RefSeq" id="WP_011456706.1">
    <property type="nucleotide sequence ID" value="NC_007802.1"/>
</dbReference>
<dbReference type="SMR" id="Q28LA6"/>
<dbReference type="STRING" id="290400.Jann_3589"/>
<dbReference type="KEGG" id="jan:Jann_3589"/>
<dbReference type="eggNOG" id="COG0133">
    <property type="taxonomic scope" value="Bacteria"/>
</dbReference>
<dbReference type="HOGENOM" id="CLU_016734_3_1_5"/>
<dbReference type="OrthoDB" id="9766131at2"/>
<dbReference type="UniPathway" id="UPA00035">
    <property type="reaction ID" value="UER00044"/>
</dbReference>
<dbReference type="Proteomes" id="UP000008326">
    <property type="component" value="Chromosome"/>
</dbReference>
<dbReference type="GO" id="GO:0005737">
    <property type="term" value="C:cytoplasm"/>
    <property type="evidence" value="ECO:0007669"/>
    <property type="project" value="TreeGrafter"/>
</dbReference>
<dbReference type="GO" id="GO:0004834">
    <property type="term" value="F:tryptophan synthase activity"/>
    <property type="evidence" value="ECO:0007669"/>
    <property type="project" value="UniProtKB-UniRule"/>
</dbReference>
<dbReference type="CDD" id="cd06446">
    <property type="entry name" value="Trp-synth_B"/>
    <property type="match status" value="1"/>
</dbReference>
<dbReference type="FunFam" id="3.40.50.1100:FF:000001">
    <property type="entry name" value="Tryptophan synthase beta chain"/>
    <property type="match status" value="1"/>
</dbReference>
<dbReference type="FunFam" id="3.40.50.1100:FF:000004">
    <property type="entry name" value="Tryptophan synthase beta chain"/>
    <property type="match status" value="1"/>
</dbReference>
<dbReference type="Gene3D" id="3.40.50.1100">
    <property type="match status" value="2"/>
</dbReference>
<dbReference type="HAMAP" id="MF_00133">
    <property type="entry name" value="Trp_synth_beta"/>
    <property type="match status" value="1"/>
</dbReference>
<dbReference type="InterPro" id="IPR006653">
    <property type="entry name" value="Trp_synth_b_CS"/>
</dbReference>
<dbReference type="InterPro" id="IPR006654">
    <property type="entry name" value="Trp_synth_beta"/>
</dbReference>
<dbReference type="InterPro" id="IPR023026">
    <property type="entry name" value="Trp_synth_beta/beta-like"/>
</dbReference>
<dbReference type="InterPro" id="IPR001926">
    <property type="entry name" value="TrpB-like_PALP"/>
</dbReference>
<dbReference type="InterPro" id="IPR036052">
    <property type="entry name" value="TrpB-like_PALP_sf"/>
</dbReference>
<dbReference type="NCBIfam" id="TIGR00263">
    <property type="entry name" value="trpB"/>
    <property type="match status" value="1"/>
</dbReference>
<dbReference type="PANTHER" id="PTHR48077:SF3">
    <property type="entry name" value="TRYPTOPHAN SYNTHASE"/>
    <property type="match status" value="1"/>
</dbReference>
<dbReference type="PANTHER" id="PTHR48077">
    <property type="entry name" value="TRYPTOPHAN SYNTHASE-RELATED"/>
    <property type="match status" value="1"/>
</dbReference>
<dbReference type="Pfam" id="PF00291">
    <property type="entry name" value="PALP"/>
    <property type="match status" value="1"/>
</dbReference>
<dbReference type="PIRSF" id="PIRSF001413">
    <property type="entry name" value="Trp_syn_beta"/>
    <property type="match status" value="1"/>
</dbReference>
<dbReference type="SUPFAM" id="SSF53686">
    <property type="entry name" value="Tryptophan synthase beta subunit-like PLP-dependent enzymes"/>
    <property type="match status" value="1"/>
</dbReference>
<dbReference type="PROSITE" id="PS00168">
    <property type="entry name" value="TRP_SYNTHASE_BETA"/>
    <property type="match status" value="1"/>
</dbReference>